<keyword id="KW-0210">Decarboxylase</keyword>
<keyword id="KW-0285">Flavoprotein</keyword>
<keyword id="KW-0288">FMN</keyword>
<keyword id="KW-0436">Ligase</keyword>
<keyword id="KW-0456">Lyase</keyword>
<keyword id="KW-0460">Magnesium</keyword>
<keyword id="KW-0479">Metal-binding</keyword>
<keyword id="KW-0511">Multifunctional enzyme</keyword>
<keyword id="KW-1185">Reference proteome</keyword>
<reference key="1">
    <citation type="journal article" date="2005" name="Genome Res.">
        <title>Complete genome sequence of the hyperthermophilic archaeon Thermococcus kodakaraensis KOD1 and comparison with Pyrococcus genomes.</title>
        <authorList>
            <person name="Fukui T."/>
            <person name="Atomi H."/>
            <person name="Kanai T."/>
            <person name="Matsumi R."/>
            <person name="Fujiwara S."/>
            <person name="Imanaka T."/>
        </authorList>
    </citation>
    <scope>NUCLEOTIDE SEQUENCE [LARGE SCALE GENOMIC DNA]</scope>
    <source>
        <strain>ATCC BAA-918 / JCM 12380 / KOD1</strain>
    </source>
</reference>
<reference key="2">
    <citation type="journal article" date="2019" name="MBio">
        <title>Identification of dephospho-coenzyme A (dephospho-CoA) kinase in Thermococcus kodakarensis and elucidation of the entire CoA biosynthesis pathway in archaea.</title>
        <authorList>
            <person name="Shimosaka T."/>
            <person name="Makarova K.S."/>
            <person name="Koonin E.V."/>
            <person name="Atomi H."/>
        </authorList>
    </citation>
    <scope>PATHWAY</scope>
    <scope>DISRUPTION PHENOTYPE</scope>
    <source>
        <strain>ATCC BAA-918 / JCM 12380 / KOD1</strain>
    </source>
</reference>
<sequence>MLHHVKLIYATKSRKLVGKKIVLAIPGSIAAVECVKLARELIRHGAEVHAVMSENATKIIHPYAMEFATGNPVVTEITGFIEHVELAGEHENKADLVLVCPATANTISKIACGIDDTPVTTVVTTAFAHTPIMIAPAMHSTMYDHPIVKENIEKLKKLGVEFIEPRFEEGKAKVASIEEIVYRVIRKLHPKSLEGKRVLVTAGATREYIDPIRYITNASSGKMGVAIAEEAEFRGAEVTLIRTKSSVPSFVENQIEVETVEEMLEAIESELKGKKYDVVVLAAAVSDFRVKNKADVKIKSGQPLVLELEPTPKIIDRVKELQPGVFLVGFKAETGLSEEELISAARKQIERAGSDLVVANTLKAFGSEENEVVLVGRDFAKKLPRMTKRELAERLWDEIEKML</sequence>
<feature type="chain" id="PRO_0000448265" description="Coenzyme A biosynthesis bifunctional protein CoaBC">
    <location>
        <begin position="1"/>
        <end position="403"/>
    </location>
</feature>
<feature type="region of interest" description="Phosphopantothenoylcysteine decarboxylase" evidence="1">
    <location>
        <begin position="1"/>
        <end position="197"/>
    </location>
</feature>
<feature type="region of interest" description="Phosphopantothenate--cysteine ligase" evidence="1">
    <location>
        <begin position="198"/>
        <end position="403"/>
    </location>
</feature>
<feature type="binding site" evidence="1">
    <location>
        <position position="287"/>
    </location>
    <ligand>
        <name>CTP</name>
        <dbReference type="ChEBI" id="CHEBI:37563"/>
    </ligand>
</feature>
<feature type="binding site" evidence="1">
    <location>
        <position position="297"/>
    </location>
    <ligand>
        <name>CTP</name>
        <dbReference type="ChEBI" id="CHEBI:37563"/>
    </ligand>
</feature>
<feature type="binding site" evidence="1">
    <location>
        <position position="330"/>
    </location>
    <ligand>
        <name>CTP</name>
        <dbReference type="ChEBI" id="CHEBI:37563"/>
    </ligand>
</feature>
<name>COABC_THEKO</name>
<gene>
    <name evidence="1" type="primary">coaBC</name>
    <name evidence="5" type="ordered locus">TK0517</name>
</gene>
<accession>Q5JF17</accession>
<organism>
    <name type="scientific">Thermococcus kodakarensis (strain ATCC BAA-918 / JCM 12380 / KOD1)</name>
    <name type="common">Pyrococcus kodakaraensis (strain KOD1)</name>
    <dbReference type="NCBI Taxonomy" id="69014"/>
    <lineage>
        <taxon>Archaea</taxon>
        <taxon>Methanobacteriati</taxon>
        <taxon>Methanobacteriota</taxon>
        <taxon>Thermococci</taxon>
        <taxon>Thermococcales</taxon>
        <taxon>Thermococcaceae</taxon>
        <taxon>Thermococcus</taxon>
    </lineage>
</organism>
<dbReference type="EC" id="4.1.1.36" evidence="1"/>
<dbReference type="EC" id="6.3.2.5" evidence="1"/>
<dbReference type="EMBL" id="AP006878">
    <property type="protein sequence ID" value="BAD84706.1"/>
    <property type="molecule type" value="Genomic_DNA"/>
</dbReference>
<dbReference type="RefSeq" id="WP_011249472.1">
    <property type="nucleotide sequence ID" value="NC_006624.1"/>
</dbReference>
<dbReference type="SMR" id="Q5JF17"/>
<dbReference type="FunCoup" id="Q5JF17">
    <property type="interactions" value="138"/>
</dbReference>
<dbReference type="STRING" id="69014.TK0517"/>
<dbReference type="EnsemblBacteria" id="BAD84706">
    <property type="protein sequence ID" value="BAD84706"/>
    <property type="gene ID" value="TK0517"/>
</dbReference>
<dbReference type="GeneID" id="78447030"/>
<dbReference type="KEGG" id="tko:TK0517"/>
<dbReference type="PATRIC" id="fig|69014.16.peg.507"/>
<dbReference type="eggNOG" id="arCOG01704">
    <property type="taxonomic scope" value="Archaea"/>
</dbReference>
<dbReference type="HOGENOM" id="CLU_033319_0_3_2"/>
<dbReference type="InParanoid" id="Q5JF17"/>
<dbReference type="OrthoDB" id="10536at2157"/>
<dbReference type="PhylomeDB" id="Q5JF17"/>
<dbReference type="UniPathway" id="UPA00241"/>
<dbReference type="Proteomes" id="UP000000536">
    <property type="component" value="Chromosome"/>
</dbReference>
<dbReference type="GO" id="GO:0071513">
    <property type="term" value="C:phosphopantothenoylcysteine decarboxylase complex"/>
    <property type="evidence" value="ECO:0000318"/>
    <property type="project" value="GO_Central"/>
</dbReference>
<dbReference type="GO" id="GO:0010181">
    <property type="term" value="F:FMN binding"/>
    <property type="evidence" value="ECO:0000318"/>
    <property type="project" value="GO_Central"/>
</dbReference>
<dbReference type="GO" id="GO:0046872">
    <property type="term" value="F:metal ion binding"/>
    <property type="evidence" value="ECO:0007669"/>
    <property type="project" value="UniProtKB-KW"/>
</dbReference>
<dbReference type="GO" id="GO:0004632">
    <property type="term" value="F:phosphopantothenate--cysteine ligase activity"/>
    <property type="evidence" value="ECO:0007669"/>
    <property type="project" value="UniProtKB-UniRule"/>
</dbReference>
<dbReference type="GO" id="GO:0004633">
    <property type="term" value="F:phosphopantothenoylcysteine decarboxylase activity"/>
    <property type="evidence" value="ECO:0000318"/>
    <property type="project" value="GO_Central"/>
</dbReference>
<dbReference type="GO" id="GO:0015937">
    <property type="term" value="P:coenzyme A biosynthetic process"/>
    <property type="evidence" value="ECO:0000318"/>
    <property type="project" value="GO_Central"/>
</dbReference>
<dbReference type="GO" id="GO:0015941">
    <property type="term" value="P:pantothenate catabolic process"/>
    <property type="evidence" value="ECO:0007669"/>
    <property type="project" value="InterPro"/>
</dbReference>
<dbReference type="Gene3D" id="3.40.50.10300">
    <property type="entry name" value="CoaB-like"/>
    <property type="match status" value="1"/>
</dbReference>
<dbReference type="Gene3D" id="3.40.50.1950">
    <property type="entry name" value="Flavin prenyltransferase-like"/>
    <property type="match status" value="1"/>
</dbReference>
<dbReference type="HAMAP" id="MF_02225">
    <property type="entry name" value="CoaBC"/>
    <property type="match status" value="1"/>
</dbReference>
<dbReference type="InterPro" id="IPR035929">
    <property type="entry name" value="CoaB-like_sf"/>
</dbReference>
<dbReference type="InterPro" id="IPR005252">
    <property type="entry name" value="CoaBC"/>
</dbReference>
<dbReference type="InterPro" id="IPR007085">
    <property type="entry name" value="DNA/pantothenate-metab_flavo_C"/>
</dbReference>
<dbReference type="InterPro" id="IPR036551">
    <property type="entry name" value="Flavin_trans-like"/>
</dbReference>
<dbReference type="InterPro" id="IPR003382">
    <property type="entry name" value="Flavoprotein"/>
</dbReference>
<dbReference type="NCBIfam" id="TIGR00521">
    <property type="entry name" value="coaBC_dfp"/>
    <property type="match status" value="1"/>
</dbReference>
<dbReference type="PANTHER" id="PTHR14359">
    <property type="entry name" value="HOMO-OLIGOMERIC FLAVIN CONTAINING CYS DECARBOXYLASE FAMILY"/>
    <property type="match status" value="1"/>
</dbReference>
<dbReference type="PANTHER" id="PTHR14359:SF6">
    <property type="entry name" value="PHOSPHOPANTOTHENOYLCYSTEINE DECARBOXYLASE"/>
    <property type="match status" value="1"/>
</dbReference>
<dbReference type="Pfam" id="PF04127">
    <property type="entry name" value="DFP"/>
    <property type="match status" value="1"/>
</dbReference>
<dbReference type="Pfam" id="PF02441">
    <property type="entry name" value="Flavoprotein"/>
    <property type="match status" value="1"/>
</dbReference>
<dbReference type="SUPFAM" id="SSF102645">
    <property type="entry name" value="CoaB-like"/>
    <property type="match status" value="1"/>
</dbReference>
<dbReference type="SUPFAM" id="SSF52507">
    <property type="entry name" value="Homo-oligomeric flavin-containing Cys decarboxylases, HFCD"/>
    <property type="match status" value="1"/>
</dbReference>
<proteinExistence type="inferred from homology"/>
<comment type="function">
    <text evidence="1">Catalyzes two sequential steps in the biosynthesis of coenzyme A. In the first step cysteine is conjugated to 4'-phosphopantothenate to form 4-phosphopantothenoylcysteine. In the second step the latter compound is decarboxylated to form 4'-phosphopantotheine.</text>
</comment>
<comment type="catalytic activity">
    <reaction evidence="1">
        <text>N-[(R)-4-phosphopantothenoyl]-L-cysteine + H(+) = (R)-4'-phosphopantetheine + CO2</text>
        <dbReference type="Rhea" id="RHEA:16793"/>
        <dbReference type="ChEBI" id="CHEBI:15378"/>
        <dbReference type="ChEBI" id="CHEBI:16526"/>
        <dbReference type="ChEBI" id="CHEBI:59458"/>
        <dbReference type="ChEBI" id="CHEBI:61723"/>
        <dbReference type="EC" id="4.1.1.36"/>
    </reaction>
</comment>
<comment type="catalytic activity">
    <reaction evidence="1">
        <text>(R)-4'-phosphopantothenate + L-cysteine + CTP = N-[(R)-4-phosphopantothenoyl]-L-cysteine + CMP + diphosphate + H(+)</text>
        <dbReference type="Rhea" id="RHEA:19397"/>
        <dbReference type="ChEBI" id="CHEBI:10986"/>
        <dbReference type="ChEBI" id="CHEBI:15378"/>
        <dbReference type="ChEBI" id="CHEBI:33019"/>
        <dbReference type="ChEBI" id="CHEBI:35235"/>
        <dbReference type="ChEBI" id="CHEBI:37563"/>
        <dbReference type="ChEBI" id="CHEBI:59458"/>
        <dbReference type="ChEBI" id="CHEBI:60377"/>
        <dbReference type="EC" id="6.3.2.5"/>
    </reaction>
</comment>
<comment type="cofactor">
    <cofactor evidence="1">
        <name>Mg(2+)</name>
        <dbReference type="ChEBI" id="CHEBI:18420"/>
    </cofactor>
</comment>
<comment type="cofactor">
    <cofactor evidence="1">
        <name>FMN</name>
        <dbReference type="ChEBI" id="CHEBI:58210"/>
    </cofactor>
    <text evidence="1">Binds 1 FMN per subunit.</text>
</comment>
<comment type="pathway">
    <text evidence="1 2">Cofactor biosynthesis; coenzyme A biosynthesis.</text>
</comment>
<comment type="disruption phenotype">
    <text evidence="2">Disruption of the gene results in CoA auxotrophy.</text>
</comment>
<comment type="similarity">
    <text evidence="1 4">In the N-terminal section; belongs to the HFCD (homo-oligomeric flavin containing Cys decarboxylase) superfamily.</text>
</comment>
<comment type="similarity">
    <text evidence="1 4">In the C-terminal section; belongs to the PPC synthetase family.</text>
</comment>
<evidence type="ECO:0000255" key="1">
    <source>
        <dbReference type="HAMAP-Rule" id="MF_02225"/>
    </source>
</evidence>
<evidence type="ECO:0000269" key="2">
    <source>
    </source>
</evidence>
<evidence type="ECO:0000303" key="3">
    <source>
    </source>
</evidence>
<evidence type="ECO:0000305" key="4"/>
<evidence type="ECO:0000312" key="5">
    <source>
        <dbReference type="EMBL" id="BAD84706.1"/>
    </source>
</evidence>
<protein>
    <recommendedName>
        <fullName evidence="1">Coenzyme A biosynthesis bifunctional protein CoaBC</fullName>
    </recommendedName>
    <alternativeName>
        <fullName evidence="1">DNA/pantothenate metabolism flavoprotein</fullName>
    </alternativeName>
    <alternativeName>
        <fullName evidence="1 3">Phosphopantothenoylcysteine synthetase/decarboxylase</fullName>
        <shortName evidence="1 3">PPCS-PPCDC</shortName>
    </alternativeName>
    <domain>
        <recommendedName>
            <fullName evidence="1">Phosphopantothenoylcysteine decarboxylase</fullName>
            <shortName evidence="1">PPC decarboxylase</shortName>
            <shortName evidence="1">PPC-DC</shortName>
            <ecNumber evidence="1">4.1.1.36</ecNumber>
        </recommendedName>
        <alternativeName>
            <fullName evidence="1">CoaC</fullName>
        </alternativeName>
    </domain>
    <domain>
        <recommendedName>
            <fullName evidence="1">Phosphopantothenate--cysteine ligase</fullName>
            <ecNumber evidence="1">6.3.2.5</ecNumber>
        </recommendedName>
        <alternativeName>
            <fullName evidence="1">CoaB</fullName>
        </alternativeName>
        <alternativeName>
            <fullName evidence="1">Phosphopantothenoylcysteine synthetase</fullName>
            <shortName evidence="1">PPC synthetase</shortName>
            <shortName evidence="1">PPC-S</shortName>
        </alternativeName>
    </domain>
</protein>